<keyword id="KW-0067">ATP-binding</keyword>
<keyword id="KW-0131">Cell cycle</keyword>
<keyword id="KW-0132">Cell division</keyword>
<keyword id="KW-0159">Chromosome partition</keyword>
<keyword id="KW-0175">Coiled coil</keyword>
<keyword id="KW-0963">Cytoplasm</keyword>
<keyword id="KW-0226">DNA condensation</keyword>
<keyword id="KW-0238">DNA-binding</keyword>
<keyword id="KW-0547">Nucleotide-binding</keyword>
<evidence type="ECO:0000255" key="1">
    <source>
        <dbReference type="HAMAP-Rule" id="MF_01800"/>
    </source>
</evidence>
<protein>
    <recommendedName>
        <fullName evidence="1">Chromosome partition protein MukB</fullName>
    </recommendedName>
    <alternativeName>
        <fullName evidence="1">Structural maintenance of chromosome-related protein</fullName>
    </alternativeName>
</protein>
<sequence length="1485" mass="169909">MIERGKFRSLTLVNWNGFFARTFDLDELVTTLSGGNGAGKSTTMAAFVTALIPDLTLLHFRNTTEAGATSGSRDKGLHGKLRAGVCYSTLDVVNSRHQRVVVGVRLQQVAGRDRKVDIKPFTIQGLPTAIQPTEILTELVAERQARVLSLPELKERVEAMEGVQFKQFNSITDYHSLMFDLGVIPKRLRSSADRSKFYRLIEASLYGGISSAITRSLRDYLLPENSGVRKAFQDMEAALRENRMTLEAIRVTQSDRDLFKHLISEATSYVAADYMRHANERRIHLDSALVLRRDLFSSRKQLVTEQYRHVEMSRELAEQSGAESDLETDYQAASDHLNLVQTAMRQQEKIERYQSDLEELTYRLEEQSEVVSEASEQQADNEARAEAAELEVDELKSQLADYQQALDVQQTRAIQYQQALQALERARALCQLPELTADNAEEWLETFHAKEQEATESLLQLEQKLSVADAAHSQFEQAYQLVVNIAGEVSRSEAWQTARELLRDWPSQQHLAERVQPLRMRLSELEQRLRAQQDAERLLQEFCKRQGNAYQPEELEALQRELESQVEELSLSVSDAGERRMAMRQELEQLKLKIQELTARAPVWLAAQDALSQLSEQSGEALEDSRQVTEYMQQLLERERETTVERDEIAASKRAIEAQIERLSQPSGAEDARLIALAERFGGVLLSEIYDDVTIDDAPYFSALYGPSRHGIVVPDLSLVREHLQGLDDCPEDLYLIEGDPQSFDDSVFAVEEHEKAVVVKIADRQWRYSRYPEVPLFGRAARENRLETLYQERDRLAERYATLSFDVQKTQRTHQAFSRFIGSHLAVAFDADPEAEIRLLNTRRGEIERALNAHEDQNQQQRQQFDQAKEGISALNRLIPLVSLLLDETLTDRVEEITEELAEAQEAARYIQQHGVSLTKLEPLLSVLQSDPQQHEQLQESYVLAQNSQRLAKQQAFALTEVVQRRAHFSYTDSAGMLTENSDLNDKLRQRLEQAEAERTRAREQLRQYQSQFTQYSQVLASLKSSYDAKRDMLKELSQELVDIGVPADANAEARARARRDELHAALSTNRSRRNQLEKQLTFCEAEMDSLQKKLRKLERDYHQIREQVVNAKAGWCAVMRMVKDNGVERRLHRRELAYMDGDELRSMSDKALGALRLAVADNEHLRDVLRLSEDPKRPERKIQFYIAVYQHLRERIRQDIIRTDDPVEAIEQMEIELGRLTEELTAREQKLAISSKSVSNIIRKTIHREQNRIRMLNQGLQAVSFGQVKSVRLNVNVREAHATLLDVLSEQQEQHQDLFNSNRLTFSEALAKLYQRLNPQMDMGQRLPQTIGEELLDYRNYLELEVEVYRGADGWLRAESGALSTGEAIGTGMSILVMVVQSWEEESRRLRGKDISPCRLLFLDEAARLDAKSIATLFELCERLEMQLIIAAPENISPEKGTTYKLVRKVFQNHEHVHVVGLRGFANEMPSLPPIAAELQQGG</sequence>
<name>MUKB_YERPG</name>
<reference key="1">
    <citation type="journal article" date="2010" name="J. Bacteriol.">
        <title>Genome sequence of the deep-rooted Yersinia pestis strain Angola reveals new insights into the evolution and pangenome of the plague bacterium.</title>
        <authorList>
            <person name="Eppinger M."/>
            <person name="Worsham P.L."/>
            <person name="Nikolich M.P."/>
            <person name="Riley D.R."/>
            <person name="Sebastian Y."/>
            <person name="Mou S."/>
            <person name="Achtman M."/>
            <person name="Lindler L.E."/>
            <person name="Ravel J."/>
        </authorList>
    </citation>
    <scope>NUCLEOTIDE SEQUENCE [LARGE SCALE GENOMIC DNA]</scope>
    <source>
        <strain>Angola</strain>
    </source>
</reference>
<proteinExistence type="inferred from homology"/>
<accession>A9R7J9</accession>
<dbReference type="EMBL" id="CP000901">
    <property type="protein sequence ID" value="ABX85151.1"/>
    <property type="molecule type" value="Genomic_DNA"/>
</dbReference>
<dbReference type="RefSeq" id="WP_002211308.1">
    <property type="nucleotide sequence ID" value="NZ_CP009935.1"/>
</dbReference>
<dbReference type="SMR" id="A9R7J9"/>
<dbReference type="GeneID" id="57977201"/>
<dbReference type="KEGG" id="ypg:YpAngola_A1971"/>
<dbReference type="PATRIC" id="fig|349746.12.peg.2947"/>
<dbReference type="GO" id="GO:0005737">
    <property type="term" value="C:cytoplasm"/>
    <property type="evidence" value="ECO:0007669"/>
    <property type="project" value="UniProtKB-UniRule"/>
</dbReference>
<dbReference type="GO" id="GO:0009295">
    <property type="term" value="C:nucleoid"/>
    <property type="evidence" value="ECO:0007669"/>
    <property type="project" value="UniProtKB-SubCell"/>
</dbReference>
<dbReference type="GO" id="GO:0005524">
    <property type="term" value="F:ATP binding"/>
    <property type="evidence" value="ECO:0007669"/>
    <property type="project" value="UniProtKB-UniRule"/>
</dbReference>
<dbReference type="GO" id="GO:0003677">
    <property type="term" value="F:DNA binding"/>
    <property type="evidence" value="ECO:0007669"/>
    <property type="project" value="UniProtKB-UniRule"/>
</dbReference>
<dbReference type="GO" id="GO:0051301">
    <property type="term" value="P:cell division"/>
    <property type="evidence" value="ECO:0007669"/>
    <property type="project" value="UniProtKB-KW"/>
</dbReference>
<dbReference type="GO" id="GO:0030261">
    <property type="term" value="P:chromosome condensation"/>
    <property type="evidence" value="ECO:0007669"/>
    <property type="project" value="UniProtKB-KW"/>
</dbReference>
<dbReference type="GO" id="GO:0007059">
    <property type="term" value="P:chromosome segregation"/>
    <property type="evidence" value="ECO:0007669"/>
    <property type="project" value="UniProtKB-UniRule"/>
</dbReference>
<dbReference type="GO" id="GO:0006260">
    <property type="term" value="P:DNA replication"/>
    <property type="evidence" value="ECO:0007669"/>
    <property type="project" value="UniProtKB-UniRule"/>
</dbReference>
<dbReference type="FunFam" id="3.30.70.3500:FF:000001">
    <property type="entry name" value="Chromosome partition protein MukB"/>
    <property type="match status" value="1"/>
</dbReference>
<dbReference type="FunFam" id="3.40.1140.10:FF:000001">
    <property type="entry name" value="Chromosome partition protein MukB"/>
    <property type="match status" value="1"/>
</dbReference>
<dbReference type="FunFam" id="3.40.1140.10:FF:000002">
    <property type="entry name" value="Chromosome partition protein MukB"/>
    <property type="match status" value="1"/>
</dbReference>
<dbReference type="Gene3D" id="1.10.287.1490">
    <property type="match status" value="1"/>
</dbReference>
<dbReference type="Gene3D" id="1.20.58.850">
    <property type="match status" value="1"/>
</dbReference>
<dbReference type="Gene3D" id="3.40.1140.10">
    <property type="match status" value="2"/>
</dbReference>
<dbReference type="Gene3D" id="1.20.5.420">
    <property type="entry name" value="Immunoglobulin FC, subunit C"/>
    <property type="match status" value="1"/>
</dbReference>
<dbReference type="Gene3D" id="3.30.70.3500">
    <property type="entry name" value="MukB, hinge domain"/>
    <property type="match status" value="1"/>
</dbReference>
<dbReference type="HAMAP" id="MF_01800">
    <property type="entry name" value="MukB"/>
    <property type="match status" value="1"/>
</dbReference>
<dbReference type="InterPro" id="IPR012090">
    <property type="entry name" value="MukB"/>
</dbReference>
<dbReference type="InterPro" id="IPR050308">
    <property type="entry name" value="MukB/SMC"/>
</dbReference>
<dbReference type="InterPro" id="IPR032520">
    <property type="entry name" value="MukB_hinge"/>
</dbReference>
<dbReference type="InterPro" id="IPR042501">
    <property type="entry name" value="MukB_hinge_sf"/>
</dbReference>
<dbReference type="InterPro" id="IPR007406">
    <property type="entry name" value="MukB_N_dom"/>
</dbReference>
<dbReference type="InterPro" id="IPR027417">
    <property type="entry name" value="P-loop_NTPase"/>
</dbReference>
<dbReference type="NCBIfam" id="NF003422">
    <property type="entry name" value="PRK04863.1"/>
    <property type="match status" value="1"/>
</dbReference>
<dbReference type="PANTHER" id="PTHR42963">
    <property type="entry name" value="CHROMOSOME PARTITION PROTEIN MUKB"/>
    <property type="match status" value="1"/>
</dbReference>
<dbReference type="PANTHER" id="PTHR42963:SF1">
    <property type="entry name" value="DUF4476 DOMAIN-CONTAINING PROTEIN"/>
    <property type="match status" value="1"/>
</dbReference>
<dbReference type="Pfam" id="PF04310">
    <property type="entry name" value="MukB"/>
    <property type="match status" value="1"/>
</dbReference>
<dbReference type="Pfam" id="PF16330">
    <property type="entry name" value="MukB_hinge"/>
    <property type="match status" value="1"/>
</dbReference>
<dbReference type="Pfam" id="PF13558">
    <property type="entry name" value="SbcC_Walker_B"/>
    <property type="match status" value="1"/>
</dbReference>
<dbReference type="PIRSF" id="PIRSF005246">
    <property type="entry name" value="MukB"/>
    <property type="match status" value="1"/>
</dbReference>
<dbReference type="SUPFAM" id="SSF52540">
    <property type="entry name" value="P-loop containing nucleoside triphosphate hydrolases"/>
    <property type="match status" value="2"/>
</dbReference>
<comment type="function">
    <text evidence="1">Plays a central role in chromosome condensation, segregation and cell cycle progression. Functions as a homodimer, which is essential for chromosome partition. Involved in negative DNA supercoiling in vivo, and by this means organize and compact chromosomes. May achieve or facilitate chromosome segregation by condensation DNA from both sides of a centrally located replisome during cell division.</text>
</comment>
<comment type="subunit">
    <text evidence="1">Homodimerization via its hinge domain. Binds to DNA via its C-terminal region. Interacts, and probably forms a ternary complex, with MukE and MukF via its C-terminal region. The complex formation is stimulated by calcium or magnesium. Interacts with tubulin-related protein FtsZ.</text>
</comment>
<comment type="subcellular location">
    <subcellularLocation>
        <location evidence="1">Cytoplasm</location>
        <location evidence="1">Nucleoid</location>
    </subcellularLocation>
    <text evidence="1">Restricted to the nucleoid region.</text>
</comment>
<comment type="domain">
    <text evidence="1">The hinge domain, which separates the large intramolecular coiled coil regions, allows the homodimerization, forming a V-shaped homodimer.</text>
</comment>
<comment type="similarity">
    <text evidence="1">Belongs to the SMC family. MukB subfamily.</text>
</comment>
<feature type="chain" id="PRO_1000187493" description="Chromosome partition protein MukB">
    <location>
        <begin position="1"/>
        <end position="1485"/>
    </location>
</feature>
<feature type="region of interest" description="Flexible hinge" evidence="1">
    <location>
        <begin position="666"/>
        <end position="783"/>
    </location>
</feature>
<feature type="coiled-coil region" evidence="1">
    <location>
        <begin position="337"/>
        <end position="480"/>
    </location>
</feature>
<feature type="coiled-coil region" evidence="1">
    <location>
        <begin position="509"/>
        <end position="605"/>
    </location>
</feature>
<feature type="coiled-coil region" evidence="1">
    <location>
        <begin position="835"/>
        <end position="915"/>
    </location>
</feature>
<feature type="coiled-coil region" evidence="1">
    <location>
        <begin position="977"/>
        <end position="1116"/>
    </location>
</feature>
<feature type="binding site" evidence="1">
    <location>
        <begin position="34"/>
        <end position="41"/>
    </location>
    <ligand>
        <name>ATP</name>
        <dbReference type="ChEBI" id="CHEBI:30616"/>
    </ligand>
</feature>
<organism>
    <name type="scientific">Yersinia pestis bv. Antiqua (strain Angola)</name>
    <dbReference type="NCBI Taxonomy" id="349746"/>
    <lineage>
        <taxon>Bacteria</taxon>
        <taxon>Pseudomonadati</taxon>
        <taxon>Pseudomonadota</taxon>
        <taxon>Gammaproteobacteria</taxon>
        <taxon>Enterobacterales</taxon>
        <taxon>Yersiniaceae</taxon>
        <taxon>Yersinia</taxon>
    </lineage>
</organism>
<gene>
    <name evidence="1" type="primary">mukB</name>
    <name type="ordered locus">YpAngola_A1971</name>
</gene>